<evidence type="ECO:0000255" key="1">
    <source>
        <dbReference type="HAMAP-Rule" id="MF_00137"/>
    </source>
</evidence>
<sequence>MKKKLYEGSSKILYSAEEDFLLIMAFSDKAVLETGETVDISGKGVLNNSISSFLMGKLEMIGIENHLIEKINMREQLIQYVEVFPIQVIISSVACGRFVKEFGMDEGYVFDKPIIDFKVRSREFNYPIVNEYQIFNFGWLTMDEIRTVQAQTLRIYDFLSGLFIGIGIRLVECKLEFGRVFNGEESIIMLTDEISPDNCRLWHINSNEKLGFELIENEPNKAFESYQLIANRLKEK</sequence>
<organism>
    <name type="scientific">Rickettsia typhi (strain ATCC VR-144 / Wilmington)</name>
    <dbReference type="NCBI Taxonomy" id="257363"/>
    <lineage>
        <taxon>Bacteria</taxon>
        <taxon>Pseudomonadati</taxon>
        <taxon>Pseudomonadota</taxon>
        <taxon>Alphaproteobacteria</taxon>
        <taxon>Rickettsiales</taxon>
        <taxon>Rickettsiaceae</taxon>
        <taxon>Rickettsieae</taxon>
        <taxon>Rickettsia</taxon>
        <taxon>typhus group</taxon>
    </lineage>
</organism>
<accession>Q68XE9</accession>
<gene>
    <name evidence="1" type="primary">purC</name>
    <name type="ordered locus">RT0211</name>
</gene>
<feature type="chain" id="PRO_0000274849" description="Phosphoribosylaminoimidazole-succinocarboxamide synthase">
    <location>
        <begin position="1"/>
        <end position="236"/>
    </location>
</feature>
<keyword id="KW-0067">ATP-binding</keyword>
<keyword id="KW-0436">Ligase</keyword>
<keyword id="KW-0547">Nucleotide-binding</keyword>
<keyword id="KW-0658">Purine biosynthesis</keyword>
<name>PUR7_RICTY</name>
<reference key="1">
    <citation type="journal article" date="2004" name="J. Bacteriol.">
        <title>Complete genome sequence of Rickettsia typhi and comparison with sequences of other Rickettsiae.</title>
        <authorList>
            <person name="McLeod M.P."/>
            <person name="Qin X."/>
            <person name="Karpathy S.E."/>
            <person name="Gioia J."/>
            <person name="Highlander S.K."/>
            <person name="Fox G.E."/>
            <person name="McNeill T.Z."/>
            <person name="Jiang H."/>
            <person name="Muzny D."/>
            <person name="Jacob L.S."/>
            <person name="Hawes A.C."/>
            <person name="Sodergren E."/>
            <person name="Gill R."/>
            <person name="Hume J."/>
            <person name="Morgan M."/>
            <person name="Fan G."/>
            <person name="Amin A.G."/>
            <person name="Gibbs R.A."/>
            <person name="Hong C."/>
            <person name="Yu X.-J."/>
            <person name="Walker D.H."/>
            <person name="Weinstock G.M."/>
        </authorList>
    </citation>
    <scope>NUCLEOTIDE SEQUENCE [LARGE SCALE GENOMIC DNA]</scope>
    <source>
        <strain>ATCC VR-144 / Wilmington</strain>
    </source>
</reference>
<proteinExistence type="inferred from homology"/>
<dbReference type="EC" id="6.3.2.6" evidence="1"/>
<dbReference type="EMBL" id="AE017197">
    <property type="protein sequence ID" value="AAU03693.1"/>
    <property type="molecule type" value="Genomic_DNA"/>
</dbReference>
<dbReference type="RefSeq" id="WP_011190679.1">
    <property type="nucleotide sequence ID" value="NC_006142.1"/>
</dbReference>
<dbReference type="SMR" id="Q68XE9"/>
<dbReference type="KEGG" id="rty:RT0211"/>
<dbReference type="eggNOG" id="COG0152">
    <property type="taxonomic scope" value="Bacteria"/>
</dbReference>
<dbReference type="HOGENOM" id="CLU_061495_2_0_5"/>
<dbReference type="OrthoDB" id="9801549at2"/>
<dbReference type="UniPathway" id="UPA00074">
    <property type="reaction ID" value="UER00131"/>
</dbReference>
<dbReference type="Proteomes" id="UP000000604">
    <property type="component" value="Chromosome"/>
</dbReference>
<dbReference type="GO" id="GO:0005829">
    <property type="term" value="C:cytosol"/>
    <property type="evidence" value="ECO:0007669"/>
    <property type="project" value="TreeGrafter"/>
</dbReference>
<dbReference type="GO" id="GO:0005524">
    <property type="term" value="F:ATP binding"/>
    <property type="evidence" value="ECO:0007669"/>
    <property type="project" value="UniProtKB-KW"/>
</dbReference>
<dbReference type="GO" id="GO:0004639">
    <property type="term" value="F:phosphoribosylaminoimidazolesuccinocarboxamide synthase activity"/>
    <property type="evidence" value="ECO:0007669"/>
    <property type="project" value="UniProtKB-UniRule"/>
</dbReference>
<dbReference type="GO" id="GO:0006189">
    <property type="term" value="P:'de novo' IMP biosynthetic process"/>
    <property type="evidence" value="ECO:0007669"/>
    <property type="project" value="UniProtKB-UniRule"/>
</dbReference>
<dbReference type="GO" id="GO:0009236">
    <property type="term" value="P:cobalamin biosynthetic process"/>
    <property type="evidence" value="ECO:0007669"/>
    <property type="project" value="InterPro"/>
</dbReference>
<dbReference type="CDD" id="cd01415">
    <property type="entry name" value="SAICAR_synt_PurC"/>
    <property type="match status" value="1"/>
</dbReference>
<dbReference type="Gene3D" id="3.30.470.20">
    <property type="entry name" value="ATP-grasp fold, B domain"/>
    <property type="match status" value="1"/>
</dbReference>
<dbReference type="Gene3D" id="3.30.200.20">
    <property type="entry name" value="Phosphorylase Kinase, domain 1"/>
    <property type="match status" value="1"/>
</dbReference>
<dbReference type="HAMAP" id="MF_00137">
    <property type="entry name" value="SAICAR_synth"/>
    <property type="match status" value="1"/>
</dbReference>
<dbReference type="InterPro" id="IPR028923">
    <property type="entry name" value="SAICAR_synt/ADE2_N"/>
</dbReference>
<dbReference type="InterPro" id="IPR033934">
    <property type="entry name" value="SAICAR_synt_PurC"/>
</dbReference>
<dbReference type="InterPro" id="IPR050089">
    <property type="entry name" value="SAICAR_synthetase"/>
</dbReference>
<dbReference type="PANTHER" id="PTHR43599">
    <property type="entry name" value="MULTIFUNCTIONAL PROTEIN ADE2"/>
    <property type="match status" value="1"/>
</dbReference>
<dbReference type="PANTHER" id="PTHR43599:SF3">
    <property type="entry name" value="SI:DKEY-6E2.2"/>
    <property type="match status" value="1"/>
</dbReference>
<dbReference type="Pfam" id="PF01259">
    <property type="entry name" value="SAICAR_synt"/>
    <property type="match status" value="1"/>
</dbReference>
<dbReference type="SUPFAM" id="SSF56104">
    <property type="entry name" value="SAICAR synthase-like"/>
    <property type="match status" value="1"/>
</dbReference>
<comment type="catalytic activity">
    <reaction evidence="1">
        <text>5-amino-1-(5-phospho-D-ribosyl)imidazole-4-carboxylate + L-aspartate + ATP = (2S)-2-[5-amino-1-(5-phospho-beta-D-ribosyl)imidazole-4-carboxamido]succinate + ADP + phosphate + 2 H(+)</text>
        <dbReference type="Rhea" id="RHEA:22628"/>
        <dbReference type="ChEBI" id="CHEBI:15378"/>
        <dbReference type="ChEBI" id="CHEBI:29991"/>
        <dbReference type="ChEBI" id="CHEBI:30616"/>
        <dbReference type="ChEBI" id="CHEBI:43474"/>
        <dbReference type="ChEBI" id="CHEBI:58443"/>
        <dbReference type="ChEBI" id="CHEBI:77657"/>
        <dbReference type="ChEBI" id="CHEBI:456216"/>
        <dbReference type="EC" id="6.3.2.6"/>
    </reaction>
</comment>
<comment type="pathway">
    <text evidence="1">Purine metabolism; IMP biosynthesis via de novo pathway; 5-amino-1-(5-phospho-D-ribosyl)imidazole-4-carboxamide from 5-amino-1-(5-phospho-D-ribosyl)imidazole-4-carboxylate: step 1/2.</text>
</comment>
<comment type="similarity">
    <text evidence="1">Belongs to the SAICAR synthetase family.</text>
</comment>
<protein>
    <recommendedName>
        <fullName evidence="1">Phosphoribosylaminoimidazole-succinocarboxamide synthase</fullName>
        <ecNumber evidence="1">6.3.2.6</ecNumber>
    </recommendedName>
    <alternativeName>
        <fullName evidence="1">SAICAR synthetase</fullName>
    </alternativeName>
</protein>